<accession>Q9KV40</accession>
<reference key="1">
    <citation type="journal article" date="2000" name="Nature">
        <title>DNA sequence of both chromosomes of the cholera pathogen Vibrio cholerae.</title>
        <authorList>
            <person name="Heidelberg J.F."/>
            <person name="Eisen J.A."/>
            <person name="Nelson W.C."/>
            <person name="Clayton R.A."/>
            <person name="Gwinn M.L."/>
            <person name="Dodson R.J."/>
            <person name="Haft D.H."/>
            <person name="Hickey E.K."/>
            <person name="Peterson J.D."/>
            <person name="Umayam L.A."/>
            <person name="Gill S.R."/>
            <person name="Nelson K.E."/>
            <person name="Read T.D."/>
            <person name="Tettelin H."/>
            <person name="Richardson D.L."/>
            <person name="Ermolaeva M.D."/>
            <person name="Vamathevan J.J."/>
            <person name="Bass S."/>
            <person name="Qin H."/>
            <person name="Dragoi I."/>
            <person name="Sellers P."/>
            <person name="McDonald L.A."/>
            <person name="Utterback T.R."/>
            <person name="Fleischmann R.D."/>
            <person name="Nierman W.C."/>
            <person name="White O."/>
            <person name="Salzberg S.L."/>
            <person name="Smith H.O."/>
            <person name="Colwell R.R."/>
            <person name="Mekalanos J.J."/>
            <person name="Venter J.C."/>
            <person name="Fraser C.M."/>
        </authorList>
    </citation>
    <scope>NUCLEOTIDE SEQUENCE [LARGE SCALE GENOMIC DNA]</scope>
    <source>
        <strain>ATCC 39315 / El Tor Inaba N16961</strain>
    </source>
</reference>
<evidence type="ECO:0000255" key="1">
    <source>
        <dbReference type="HAMAP-Rule" id="MF_00037"/>
    </source>
</evidence>
<evidence type="ECO:0000305" key="2"/>
<evidence type="ECO:0007829" key="3">
    <source>
        <dbReference type="PDB" id="3I99"/>
    </source>
</evidence>
<keyword id="KW-0002">3D-structure</keyword>
<keyword id="KW-0131">Cell cycle</keyword>
<keyword id="KW-0132">Cell division</keyword>
<keyword id="KW-0133">Cell shape</keyword>
<keyword id="KW-0961">Cell wall biogenesis/degradation</keyword>
<keyword id="KW-0963">Cytoplasm</keyword>
<keyword id="KW-0274">FAD</keyword>
<keyword id="KW-0285">Flavoprotein</keyword>
<keyword id="KW-0521">NADP</keyword>
<keyword id="KW-0560">Oxidoreductase</keyword>
<keyword id="KW-0573">Peptidoglycan synthesis</keyword>
<keyword id="KW-1185">Reference proteome</keyword>
<comment type="function">
    <text evidence="1">Cell wall formation.</text>
</comment>
<comment type="catalytic activity">
    <reaction evidence="1">
        <text>UDP-N-acetyl-alpha-D-muramate + NADP(+) = UDP-N-acetyl-3-O-(1-carboxyvinyl)-alpha-D-glucosamine + NADPH + H(+)</text>
        <dbReference type="Rhea" id="RHEA:12248"/>
        <dbReference type="ChEBI" id="CHEBI:15378"/>
        <dbReference type="ChEBI" id="CHEBI:57783"/>
        <dbReference type="ChEBI" id="CHEBI:58349"/>
        <dbReference type="ChEBI" id="CHEBI:68483"/>
        <dbReference type="ChEBI" id="CHEBI:70757"/>
        <dbReference type="EC" id="1.3.1.98"/>
    </reaction>
</comment>
<comment type="cofactor">
    <cofactor evidence="1">
        <name>FAD</name>
        <dbReference type="ChEBI" id="CHEBI:57692"/>
    </cofactor>
</comment>
<comment type="pathway">
    <text evidence="1">Cell wall biogenesis; peptidoglycan biosynthesis.</text>
</comment>
<comment type="subcellular location">
    <subcellularLocation>
        <location evidence="1">Cytoplasm</location>
    </subcellularLocation>
</comment>
<comment type="similarity">
    <text evidence="1">Belongs to the MurB family.</text>
</comment>
<comment type="sequence caution" evidence="2">
    <conflict type="erroneous initiation">
        <sequence resource="EMBL-CDS" id="AAF93491"/>
    </conflict>
</comment>
<dbReference type="EC" id="1.3.1.98" evidence="1"/>
<dbReference type="EMBL" id="AE003852">
    <property type="protein sequence ID" value="AAF93491.1"/>
    <property type="status" value="ALT_INIT"/>
    <property type="molecule type" value="Genomic_DNA"/>
</dbReference>
<dbReference type="PIR" id="D82337">
    <property type="entry name" value="D82337"/>
</dbReference>
<dbReference type="RefSeq" id="NP_229972.1">
    <property type="nucleotide sequence ID" value="NC_002505.1"/>
</dbReference>
<dbReference type="PDB" id="3I99">
    <property type="method" value="X-ray"/>
    <property type="resolution" value="2.20 A"/>
    <property type="chains" value="A=1-347"/>
</dbReference>
<dbReference type="PDBsum" id="3I99"/>
<dbReference type="SMR" id="Q9KV40"/>
<dbReference type="STRING" id="243277.VC_0318"/>
<dbReference type="DNASU" id="2615109"/>
<dbReference type="EnsemblBacteria" id="AAF93491">
    <property type="protein sequence ID" value="AAF93491"/>
    <property type="gene ID" value="VC_0318"/>
</dbReference>
<dbReference type="KEGG" id="vch:VC_0318"/>
<dbReference type="PATRIC" id="fig|243277.26.peg.295"/>
<dbReference type="eggNOG" id="COG0812">
    <property type="taxonomic scope" value="Bacteria"/>
</dbReference>
<dbReference type="HOGENOM" id="CLU_035304_0_0_6"/>
<dbReference type="UniPathway" id="UPA00219"/>
<dbReference type="EvolutionaryTrace" id="Q9KV40"/>
<dbReference type="Proteomes" id="UP000000584">
    <property type="component" value="Chromosome 1"/>
</dbReference>
<dbReference type="GO" id="GO:0005829">
    <property type="term" value="C:cytosol"/>
    <property type="evidence" value="ECO:0000318"/>
    <property type="project" value="GO_Central"/>
</dbReference>
<dbReference type="GO" id="GO:0071949">
    <property type="term" value="F:FAD binding"/>
    <property type="evidence" value="ECO:0007669"/>
    <property type="project" value="InterPro"/>
</dbReference>
<dbReference type="GO" id="GO:0050660">
    <property type="term" value="F:flavin adenine dinucleotide binding"/>
    <property type="evidence" value="ECO:0000318"/>
    <property type="project" value="GO_Central"/>
</dbReference>
<dbReference type="GO" id="GO:0008762">
    <property type="term" value="F:UDP-N-acetylmuramate dehydrogenase activity"/>
    <property type="evidence" value="ECO:0000318"/>
    <property type="project" value="GO_Central"/>
</dbReference>
<dbReference type="GO" id="GO:0051301">
    <property type="term" value="P:cell division"/>
    <property type="evidence" value="ECO:0007669"/>
    <property type="project" value="UniProtKB-KW"/>
</dbReference>
<dbReference type="GO" id="GO:0071555">
    <property type="term" value="P:cell wall organization"/>
    <property type="evidence" value="ECO:0000318"/>
    <property type="project" value="GO_Central"/>
</dbReference>
<dbReference type="GO" id="GO:0009252">
    <property type="term" value="P:peptidoglycan biosynthetic process"/>
    <property type="evidence" value="ECO:0007669"/>
    <property type="project" value="UniProtKB-UniRule"/>
</dbReference>
<dbReference type="GO" id="GO:0008360">
    <property type="term" value="P:regulation of cell shape"/>
    <property type="evidence" value="ECO:0007669"/>
    <property type="project" value="UniProtKB-KW"/>
</dbReference>
<dbReference type="Gene3D" id="3.30.465.10">
    <property type="match status" value="1"/>
</dbReference>
<dbReference type="Gene3D" id="3.90.78.10">
    <property type="entry name" value="UDP-N-acetylenolpyruvoylglucosamine reductase, C-terminal domain"/>
    <property type="match status" value="1"/>
</dbReference>
<dbReference type="Gene3D" id="3.30.43.10">
    <property type="entry name" value="Uridine Diphospho-n-acetylenolpyruvylglucosamine Reductase, domain 2"/>
    <property type="match status" value="1"/>
</dbReference>
<dbReference type="HAMAP" id="MF_00037">
    <property type="entry name" value="MurB"/>
    <property type="match status" value="1"/>
</dbReference>
<dbReference type="InterPro" id="IPR016166">
    <property type="entry name" value="FAD-bd_PCMH"/>
</dbReference>
<dbReference type="InterPro" id="IPR036318">
    <property type="entry name" value="FAD-bd_PCMH-like_sf"/>
</dbReference>
<dbReference type="InterPro" id="IPR016167">
    <property type="entry name" value="FAD-bd_PCMH_sub1"/>
</dbReference>
<dbReference type="InterPro" id="IPR016169">
    <property type="entry name" value="FAD-bd_PCMH_sub2"/>
</dbReference>
<dbReference type="InterPro" id="IPR003170">
    <property type="entry name" value="MurB"/>
</dbReference>
<dbReference type="InterPro" id="IPR011601">
    <property type="entry name" value="MurB_C"/>
</dbReference>
<dbReference type="InterPro" id="IPR036635">
    <property type="entry name" value="MurB_C_sf"/>
</dbReference>
<dbReference type="InterPro" id="IPR006094">
    <property type="entry name" value="Oxid_FAD_bind_N"/>
</dbReference>
<dbReference type="NCBIfam" id="TIGR00179">
    <property type="entry name" value="murB"/>
    <property type="match status" value="1"/>
</dbReference>
<dbReference type="NCBIfam" id="NF000755">
    <property type="entry name" value="PRK00046.1"/>
    <property type="match status" value="1"/>
</dbReference>
<dbReference type="PANTHER" id="PTHR21071">
    <property type="entry name" value="UDP-N-ACETYLENOLPYRUVOYLGLUCOSAMINE REDUCTASE"/>
    <property type="match status" value="1"/>
</dbReference>
<dbReference type="PANTHER" id="PTHR21071:SF4">
    <property type="entry name" value="UDP-N-ACETYLENOLPYRUVOYLGLUCOSAMINE REDUCTASE"/>
    <property type="match status" value="1"/>
</dbReference>
<dbReference type="Pfam" id="PF01565">
    <property type="entry name" value="FAD_binding_4"/>
    <property type="match status" value="1"/>
</dbReference>
<dbReference type="Pfam" id="PF02873">
    <property type="entry name" value="MurB_C"/>
    <property type="match status" value="1"/>
</dbReference>
<dbReference type="SUPFAM" id="SSF56176">
    <property type="entry name" value="FAD-binding/transporter-associated domain-like"/>
    <property type="match status" value="1"/>
</dbReference>
<dbReference type="SUPFAM" id="SSF56194">
    <property type="entry name" value="Uridine diphospho-N-Acetylenolpyruvylglucosamine reductase, MurB, C-terminal domain"/>
    <property type="match status" value="1"/>
</dbReference>
<dbReference type="PROSITE" id="PS51387">
    <property type="entry name" value="FAD_PCMH"/>
    <property type="match status" value="1"/>
</dbReference>
<name>MURB_VIBCH</name>
<feature type="chain" id="PRO_0000179285" description="UDP-N-acetylenolpyruvoylglucosamine reductase">
    <location>
        <begin position="1"/>
        <end position="347"/>
    </location>
</feature>
<feature type="domain" description="FAD-binding PCMH-type" evidence="1">
    <location>
        <begin position="17"/>
        <end position="187"/>
    </location>
</feature>
<feature type="active site" evidence="1">
    <location>
        <position position="163"/>
    </location>
</feature>
<feature type="active site" description="Proton donor" evidence="1">
    <location>
        <position position="232"/>
    </location>
</feature>
<feature type="active site" evidence="1">
    <location>
        <position position="327"/>
    </location>
</feature>
<feature type="strand" evidence="3">
    <location>
        <begin position="4"/>
        <end position="9"/>
    </location>
</feature>
<feature type="helix" evidence="3">
    <location>
        <begin position="10"/>
        <end position="12"/>
    </location>
</feature>
<feature type="strand" evidence="3">
    <location>
        <begin position="20"/>
        <end position="27"/>
    </location>
</feature>
<feature type="helix" evidence="3">
    <location>
        <begin position="30"/>
        <end position="37"/>
    </location>
</feature>
<feature type="strand" evidence="3">
    <location>
        <begin position="38"/>
        <end position="40"/>
    </location>
</feature>
<feature type="turn" evidence="3">
    <location>
        <begin position="41"/>
        <end position="44"/>
    </location>
</feature>
<feature type="strand" evidence="3">
    <location>
        <begin position="47"/>
        <end position="52"/>
    </location>
</feature>
<feature type="strand" evidence="3">
    <location>
        <begin position="56"/>
        <end position="58"/>
    </location>
</feature>
<feature type="strand" evidence="3">
    <location>
        <begin position="62"/>
        <end position="69"/>
    </location>
</feature>
<feature type="strand" evidence="3">
    <location>
        <begin position="74"/>
        <end position="78"/>
    </location>
</feature>
<feature type="strand" evidence="3">
    <location>
        <begin position="80"/>
        <end position="88"/>
    </location>
</feature>
<feature type="helix" evidence="3">
    <location>
        <begin position="93"/>
        <end position="102"/>
    </location>
</feature>
<feature type="helix" evidence="3">
    <location>
        <begin position="109"/>
        <end position="111"/>
    </location>
</feature>
<feature type="helix" evidence="3">
    <location>
        <begin position="118"/>
        <end position="120"/>
    </location>
</feature>
<feature type="turn" evidence="3">
    <location>
        <begin position="121"/>
        <end position="125"/>
    </location>
</feature>
<feature type="helix" evidence="3">
    <location>
        <begin position="133"/>
        <end position="135"/>
    </location>
</feature>
<feature type="strand" evidence="3">
    <location>
        <begin position="137"/>
        <end position="144"/>
    </location>
</feature>
<feature type="turn" evidence="3">
    <location>
        <begin position="145"/>
        <end position="147"/>
    </location>
</feature>
<feature type="strand" evidence="3">
    <location>
        <begin position="148"/>
        <end position="154"/>
    </location>
</feature>
<feature type="helix" evidence="3">
    <location>
        <begin position="156"/>
        <end position="158"/>
    </location>
</feature>
<feature type="helix" evidence="3">
    <location>
        <begin position="166"/>
        <end position="168"/>
    </location>
</feature>
<feature type="turn" evidence="3">
    <location>
        <begin position="169"/>
        <end position="174"/>
    </location>
</feature>
<feature type="strand" evidence="3">
    <location>
        <begin position="175"/>
        <end position="187"/>
    </location>
</feature>
<feature type="helix" evidence="3">
    <location>
        <begin position="195"/>
        <end position="199"/>
    </location>
</feature>
<feature type="helix" evidence="3">
    <location>
        <begin position="206"/>
        <end position="220"/>
    </location>
</feature>
<feature type="turn" evidence="3">
    <location>
        <begin position="224"/>
        <end position="226"/>
    </location>
</feature>
<feature type="strand" evidence="3">
    <location>
        <begin position="229"/>
        <end position="234"/>
    </location>
</feature>
<feature type="helix" evidence="3">
    <location>
        <begin position="241"/>
        <end position="250"/>
    </location>
</feature>
<feature type="strand" evidence="3">
    <location>
        <begin position="260"/>
        <end position="265"/>
    </location>
</feature>
<feature type="helix" evidence="3">
    <location>
        <begin position="267"/>
        <end position="273"/>
    </location>
</feature>
<feature type="strand" evidence="3">
    <location>
        <begin position="284"/>
        <end position="286"/>
    </location>
</feature>
<feature type="strand" evidence="3">
    <location>
        <begin position="293"/>
        <end position="296"/>
    </location>
</feature>
<feature type="helix" evidence="3">
    <location>
        <begin position="302"/>
        <end position="320"/>
    </location>
</feature>
<feature type="strand" evidence="3">
    <location>
        <begin position="328"/>
        <end position="331"/>
    </location>
</feature>
<feature type="strand" evidence="3">
    <location>
        <begin position="333"/>
        <end position="336"/>
    </location>
</feature>
<organism>
    <name type="scientific">Vibrio cholerae serotype O1 (strain ATCC 39315 / El Tor Inaba N16961)</name>
    <dbReference type="NCBI Taxonomy" id="243277"/>
    <lineage>
        <taxon>Bacteria</taxon>
        <taxon>Pseudomonadati</taxon>
        <taxon>Pseudomonadota</taxon>
        <taxon>Gammaproteobacteria</taxon>
        <taxon>Vibrionales</taxon>
        <taxon>Vibrionaceae</taxon>
        <taxon>Vibrio</taxon>
    </lineage>
</organism>
<gene>
    <name evidence="1" type="primary">murB</name>
    <name type="ordered locus">VC_0318</name>
</gene>
<proteinExistence type="evidence at protein level"/>
<sequence>MQIQLGANLKPYHTFGIEQLAAQLVVAESIDDLKALYCSAEWASLPKLIIGKGSNMLFTCHYTGMIVVNRLNGIEHQQDDDYHRLHVAGGEDWPSLVSWCVEQGIGGLENLALIPGCAGSAPIQNIGAYGVEFKDVCDYVEYLCLETGTVKRLTMEECQFGYRDSIFKHQLYQKAVVTAVGLKFAKAWQPIIQYGPLKDLSSDCAIHDVYQRVCATRMEKLPDPAVMGNAGSFFKNPVISQQAFARLQIEHPDVVAYPAEQGVKVAAGWLIDQAGLKGHQIGGAKVHPKQALVIVNTGDASAQDVLMLAADIQQRVFNCYGIELEHEVRFIGESEETNLKQWMSEQA</sequence>
<protein>
    <recommendedName>
        <fullName evidence="1">UDP-N-acetylenolpyruvoylglucosamine reductase</fullName>
        <ecNumber evidence="1">1.3.1.98</ecNumber>
    </recommendedName>
    <alternativeName>
        <fullName evidence="1">UDP-N-acetylmuramate dehydrogenase</fullName>
    </alternativeName>
</protein>